<feature type="chain" id="PRO_0000055435" description="Protein-export protein SecB">
    <location>
        <begin position="1"/>
        <end position="164"/>
    </location>
</feature>
<name>SECB_ZYMMO</name>
<accession>Q9EZ97</accession>
<accession>Q5NLZ8</accession>
<reference key="1">
    <citation type="submission" date="2000-08" db="EMBL/GenBank/DDBJ databases">
        <title>Zymomonas mobilis ZM4 fosmid clone 43E12 complete sequence.</title>
        <authorList>
            <person name="Shin I.S."/>
            <person name="Kang H.S."/>
        </authorList>
    </citation>
    <scope>NUCLEOTIDE SEQUENCE [GENOMIC DNA]</scope>
    <source>
        <strain>ATCC 31821 / ZM4 / CP4</strain>
    </source>
</reference>
<reference key="2">
    <citation type="journal article" date="2005" name="Nat. Biotechnol.">
        <title>The genome sequence of the ethanologenic bacterium Zymomonas mobilis ZM4.</title>
        <authorList>
            <person name="Seo J.-S."/>
            <person name="Chong H."/>
            <person name="Park H.S."/>
            <person name="Yoon K.-O."/>
            <person name="Jung C."/>
            <person name="Kim J.J."/>
            <person name="Hong J.H."/>
            <person name="Kim H."/>
            <person name="Kim J.-H."/>
            <person name="Kil J.-I."/>
            <person name="Park C.J."/>
            <person name="Oh H.-M."/>
            <person name="Lee J.-S."/>
            <person name="Jin S.-J."/>
            <person name="Um H.-W."/>
            <person name="Lee H.-J."/>
            <person name="Oh S.-J."/>
            <person name="Kim J.Y."/>
            <person name="Kang H.L."/>
            <person name="Lee S.Y."/>
            <person name="Lee K.J."/>
            <person name="Kang H.S."/>
        </authorList>
    </citation>
    <scope>NUCLEOTIDE SEQUENCE [LARGE SCALE GENOMIC DNA]</scope>
    <source>
        <strain>ATCC 31821 / ZM4 / CP4</strain>
    </source>
</reference>
<proteinExistence type="inferred from homology"/>
<evidence type="ECO:0000255" key="1">
    <source>
        <dbReference type="HAMAP-Rule" id="MF_00821"/>
    </source>
</evidence>
<organism>
    <name type="scientific">Zymomonas mobilis subsp. mobilis (strain ATCC 31821 / ZM4 / CP4)</name>
    <dbReference type="NCBI Taxonomy" id="264203"/>
    <lineage>
        <taxon>Bacteria</taxon>
        <taxon>Pseudomonadati</taxon>
        <taxon>Pseudomonadota</taxon>
        <taxon>Alphaproteobacteria</taxon>
        <taxon>Sphingomonadales</taxon>
        <taxon>Zymomonadaceae</taxon>
        <taxon>Zymomonas</taxon>
    </lineage>
</organism>
<dbReference type="EMBL" id="AF300471">
    <property type="protein sequence ID" value="AAG42408.1"/>
    <property type="molecule type" value="Genomic_DNA"/>
</dbReference>
<dbReference type="EMBL" id="AE008692">
    <property type="protein sequence ID" value="AAV90262.1"/>
    <property type="molecule type" value="Genomic_DNA"/>
</dbReference>
<dbReference type="RefSeq" id="WP_011241388.1">
    <property type="nucleotide sequence ID" value="NZ_CP035711.1"/>
</dbReference>
<dbReference type="SMR" id="Q9EZ97"/>
<dbReference type="STRING" id="264203.ZMO1638"/>
<dbReference type="GeneID" id="79905032"/>
<dbReference type="KEGG" id="zmo:ZMO1638"/>
<dbReference type="eggNOG" id="COG1952">
    <property type="taxonomic scope" value="Bacteria"/>
</dbReference>
<dbReference type="HOGENOM" id="CLU_111574_0_0_5"/>
<dbReference type="Proteomes" id="UP000001173">
    <property type="component" value="Chromosome"/>
</dbReference>
<dbReference type="GO" id="GO:0005737">
    <property type="term" value="C:cytoplasm"/>
    <property type="evidence" value="ECO:0007669"/>
    <property type="project" value="UniProtKB-SubCell"/>
</dbReference>
<dbReference type="GO" id="GO:0051082">
    <property type="term" value="F:unfolded protein binding"/>
    <property type="evidence" value="ECO:0007669"/>
    <property type="project" value="InterPro"/>
</dbReference>
<dbReference type="GO" id="GO:0006457">
    <property type="term" value="P:protein folding"/>
    <property type="evidence" value="ECO:0007669"/>
    <property type="project" value="UniProtKB-UniRule"/>
</dbReference>
<dbReference type="GO" id="GO:0051262">
    <property type="term" value="P:protein tetramerization"/>
    <property type="evidence" value="ECO:0007669"/>
    <property type="project" value="InterPro"/>
</dbReference>
<dbReference type="GO" id="GO:0015031">
    <property type="term" value="P:protein transport"/>
    <property type="evidence" value="ECO:0007669"/>
    <property type="project" value="UniProtKB-UniRule"/>
</dbReference>
<dbReference type="Gene3D" id="3.10.420.10">
    <property type="entry name" value="SecB-like"/>
    <property type="match status" value="1"/>
</dbReference>
<dbReference type="HAMAP" id="MF_00821">
    <property type="entry name" value="SecB"/>
    <property type="match status" value="1"/>
</dbReference>
<dbReference type="InterPro" id="IPR003708">
    <property type="entry name" value="SecB"/>
</dbReference>
<dbReference type="InterPro" id="IPR035958">
    <property type="entry name" value="SecB-like_sf"/>
</dbReference>
<dbReference type="NCBIfam" id="NF004392">
    <property type="entry name" value="PRK05751.1-3"/>
    <property type="match status" value="1"/>
</dbReference>
<dbReference type="NCBIfam" id="TIGR00809">
    <property type="entry name" value="secB"/>
    <property type="match status" value="1"/>
</dbReference>
<dbReference type="PANTHER" id="PTHR36918">
    <property type="match status" value="1"/>
</dbReference>
<dbReference type="PANTHER" id="PTHR36918:SF1">
    <property type="entry name" value="PROTEIN-EXPORT PROTEIN SECB"/>
    <property type="match status" value="1"/>
</dbReference>
<dbReference type="Pfam" id="PF02556">
    <property type="entry name" value="SecB"/>
    <property type="match status" value="1"/>
</dbReference>
<dbReference type="PRINTS" id="PR01594">
    <property type="entry name" value="SECBCHAPRONE"/>
</dbReference>
<dbReference type="SUPFAM" id="SSF54611">
    <property type="entry name" value="SecB-like"/>
    <property type="match status" value="1"/>
</dbReference>
<sequence>MSGNNFNASNADTDHLPQVSILAQYIKDLSFENPNAPAVYQWQTQPHIEVQFNIGTQPMAQDVYEVALKVDVSAKADEGVVFHVELVYNGLFAIKNVPADQIQPFLYIEAPRILFPFVRRILADSVRDGNFPPLMLEPIDFAALYMQQTEQQDMLSNTEPAGQA</sequence>
<gene>
    <name evidence="1" type="primary">secB</name>
    <name type="ordered locus">ZMO1638</name>
</gene>
<keyword id="KW-0143">Chaperone</keyword>
<keyword id="KW-0963">Cytoplasm</keyword>
<keyword id="KW-0653">Protein transport</keyword>
<keyword id="KW-1185">Reference proteome</keyword>
<keyword id="KW-0811">Translocation</keyword>
<keyword id="KW-0813">Transport</keyword>
<protein>
    <recommendedName>
        <fullName evidence="1">Protein-export protein SecB</fullName>
    </recommendedName>
</protein>
<comment type="function">
    <text evidence="1">One of the proteins required for the normal export of preproteins out of the cell cytoplasm. It is a molecular chaperone that binds to a subset of precursor proteins, maintaining them in a translocation-competent state. It also specifically binds to its receptor SecA.</text>
</comment>
<comment type="subunit">
    <text evidence="1">Homotetramer, a dimer of dimers. One homotetramer interacts with 1 SecA dimer.</text>
</comment>
<comment type="subcellular location">
    <subcellularLocation>
        <location evidence="1">Cytoplasm</location>
    </subcellularLocation>
</comment>
<comment type="similarity">
    <text evidence="1">Belongs to the SecB family.</text>
</comment>